<feature type="signal peptide" evidence="1">
    <location>
        <begin position="1"/>
        <end position="41"/>
    </location>
</feature>
<feature type="chain" id="PRO_0000068140" description="Inactive heparanase-2">
    <location>
        <begin position="42"/>
        <end position="592"/>
    </location>
</feature>
<feature type="glycosylation site" description="N-linked (GlcNAc...) asparagine" evidence="1">
    <location>
        <position position="254"/>
    </location>
</feature>
<feature type="glycosylation site" description="N-linked (GlcNAc...) asparagine" evidence="1">
    <location>
        <position position="392"/>
    </location>
</feature>
<feature type="splice variant" id="VSP_015850" description="In isoform 4." evidence="7">
    <location>
        <begin position="150"/>
        <end position="261"/>
    </location>
</feature>
<feature type="splice variant" id="VSP_015851" description="In isoform 3." evidence="7">
    <location>
        <begin position="204"/>
        <end position="261"/>
    </location>
</feature>
<feature type="splice variant" id="VSP_015852" description="In isoform 2." evidence="8">
    <original>SVQLNGQPLV</original>
    <variation>TQRCQYCGII</variation>
    <location>
        <begin position="539"/>
        <end position="548"/>
    </location>
</feature>
<feature type="splice variant" id="VSP_015853" description="In isoform 2." evidence="8">
    <location>
        <begin position="549"/>
        <end position="592"/>
    </location>
</feature>
<feature type="sequence variant" id="VAR_030472" description="In dbSNP:rs17110744.">
    <original>A</original>
    <variation>T</variation>
    <location>
        <position position="315"/>
    </location>
</feature>
<feature type="sequence variant" id="VAR_023601" description="In dbSNP:rs10883100." evidence="2 6">
    <original>Y</original>
    <variation>F</variation>
    <location>
        <position position="579"/>
    </location>
</feature>
<feature type="sequence conflict" description="In Ref. 2; CAC82492." evidence="9" ref="2">
    <original>P</original>
    <variation>L</variation>
    <location>
        <position position="12"/>
    </location>
</feature>
<feature type="sequence conflict" description="In Ref. 2; CAC82491/CAC82492." evidence="9" ref="2">
    <original>F</original>
    <variation>S</variation>
    <location>
        <position position="213"/>
    </location>
</feature>
<reference key="1">
    <citation type="journal article" date="2000" name="Biochem. Biophys. Res. Commun.">
        <title>Cloning and expression profiling of Hpa2, a novel mammalian heparanase family member.</title>
        <authorList>
            <person name="McKenzie E."/>
            <person name="Tyson K."/>
            <person name="Stamps A."/>
            <person name="Smith P."/>
            <person name="Turner P."/>
            <person name="Barry R."/>
            <person name="Hircock M."/>
            <person name="Patel S."/>
            <person name="Barry E."/>
            <person name="Stubberfield C."/>
            <person name="Terrett J."/>
            <person name="Page M."/>
        </authorList>
    </citation>
    <scope>NUCLEOTIDE SEQUENCE [MRNA] (ISOFORMS 1; 3 AND 4)</scope>
    <scope>VARIANT PHE-579</scope>
    <scope>TISSUE SPECIFICITY</scope>
    <source>
        <tissue>Heart</tissue>
    </source>
</reference>
<reference key="2">
    <citation type="submission" date="2002-01" db="EMBL/GenBank/DDBJ databases">
        <authorList>
            <person name="Legoux P."/>
            <person name="Legoux R."/>
            <person name="O'Brien D."/>
            <person name="Salome M."/>
        </authorList>
    </citation>
    <scope>NUCLEOTIDE SEQUENCE [MRNA] (ISOFORMS 1 AND 2)</scope>
    <scope>VARIANT PHE-579</scope>
    <source>
        <tissue>Prostate</tissue>
    </source>
</reference>
<reference key="3">
    <citation type="journal article" date="2004" name="Nature">
        <title>The DNA sequence and comparative analysis of human chromosome 10.</title>
        <authorList>
            <person name="Deloukas P."/>
            <person name="Earthrowl M.E."/>
            <person name="Grafham D.V."/>
            <person name="Rubenfield M."/>
            <person name="French L."/>
            <person name="Steward C.A."/>
            <person name="Sims S.K."/>
            <person name="Jones M.C."/>
            <person name="Searle S."/>
            <person name="Scott C."/>
            <person name="Howe K."/>
            <person name="Hunt S.E."/>
            <person name="Andrews T.D."/>
            <person name="Gilbert J.G.R."/>
            <person name="Swarbreck D."/>
            <person name="Ashurst J.L."/>
            <person name="Taylor A."/>
            <person name="Battles J."/>
            <person name="Bird C.P."/>
            <person name="Ainscough R."/>
            <person name="Almeida J.P."/>
            <person name="Ashwell R.I.S."/>
            <person name="Ambrose K.D."/>
            <person name="Babbage A.K."/>
            <person name="Bagguley C.L."/>
            <person name="Bailey J."/>
            <person name="Banerjee R."/>
            <person name="Bates K."/>
            <person name="Beasley H."/>
            <person name="Bray-Allen S."/>
            <person name="Brown A.J."/>
            <person name="Brown J.Y."/>
            <person name="Burford D.C."/>
            <person name="Burrill W."/>
            <person name="Burton J."/>
            <person name="Cahill P."/>
            <person name="Camire D."/>
            <person name="Carter N.P."/>
            <person name="Chapman J.C."/>
            <person name="Clark S.Y."/>
            <person name="Clarke G."/>
            <person name="Clee C.M."/>
            <person name="Clegg S."/>
            <person name="Corby N."/>
            <person name="Coulson A."/>
            <person name="Dhami P."/>
            <person name="Dutta I."/>
            <person name="Dunn M."/>
            <person name="Faulkner L."/>
            <person name="Frankish A."/>
            <person name="Frankland J.A."/>
            <person name="Garner P."/>
            <person name="Garnett J."/>
            <person name="Gribble S."/>
            <person name="Griffiths C."/>
            <person name="Grocock R."/>
            <person name="Gustafson E."/>
            <person name="Hammond S."/>
            <person name="Harley J.L."/>
            <person name="Hart E."/>
            <person name="Heath P.D."/>
            <person name="Ho T.P."/>
            <person name="Hopkins B."/>
            <person name="Horne J."/>
            <person name="Howden P.J."/>
            <person name="Huckle E."/>
            <person name="Hynds C."/>
            <person name="Johnson C."/>
            <person name="Johnson D."/>
            <person name="Kana A."/>
            <person name="Kay M."/>
            <person name="Kimberley A.M."/>
            <person name="Kershaw J.K."/>
            <person name="Kokkinaki M."/>
            <person name="Laird G.K."/>
            <person name="Lawlor S."/>
            <person name="Lee H.M."/>
            <person name="Leongamornlert D.A."/>
            <person name="Laird G."/>
            <person name="Lloyd C."/>
            <person name="Lloyd D.M."/>
            <person name="Loveland J."/>
            <person name="Lovell J."/>
            <person name="McLaren S."/>
            <person name="McLay K.E."/>
            <person name="McMurray A."/>
            <person name="Mashreghi-Mohammadi M."/>
            <person name="Matthews L."/>
            <person name="Milne S."/>
            <person name="Nickerson T."/>
            <person name="Nguyen M."/>
            <person name="Overton-Larty E."/>
            <person name="Palmer S.A."/>
            <person name="Pearce A.V."/>
            <person name="Peck A.I."/>
            <person name="Pelan S."/>
            <person name="Phillimore B."/>
            <person name="Porter K."/>
            <person name="Rice C.M."/>
            <person name="Rogosin A."/>
            <person name="Ross M.T."/>
            <person name="Sarafidou T."/>
            <person name="Sehra H.K."/>
            <person name="Shownkeen R."/>
            <person name="Skuce C.D."/>
            <person name="Smith M."/>
            <person name="Standring L."/>
            <person name="Sycamore N."/>
            <person name="Tester J."/>
            <person name="Thorpe A."/>
            <person name="Torcasso W."/>
            <person name="Tracey A."/>
            <person name="Tromans A."/>
            <person name="Tsolas J."/>
            <person name="Wall M."/>
            <person name="Walsh J."/>
            <person name="Wang H."/>
            <person name="Weinstock K."/>
            <person name="West A.P."/>
            <person name="Willey D.L."/>
            <person name="Whitehead S.L."/>
            <person name="Wilming L."/>
            <person name="Wray P.W."/>
            <person name="Young L."/>
            <person name="Chen Y."/>
            <person name="Lovering R.C."/>
            <person name="Moschonas N.K."/>
            <person name="Siebert R."/>
            <person name="Fechtel K."/>
            <person name="Bentley D."/>
            <person name="Durbin R.M."/>
            <person name="Hubbard T."/>
            <person name="Doucette-Stamm L."/>
            <person name="Beck S."/>
            <person name="Smith D.R."/>
            <person name="Rogers J."/>
        </authorList>
    </citation>
    <scope>NUCLEOTIDE SEQUENCE [LARGE SCALE GENOMIC DNA]</scope>
</reference>
<reference key="4">
    <citation type="journal article" date="2010" name="Am. J. Hum. Genet.">
        <title>Loss-of-function mutations in HPSE2 cause the autosomal recessive urofacial syndrome.</title>
        <authorList>
            <person name="Pang J."/>
            <person name="Zhang S."/>
            <person name="Yang P."/>
            <person name="Hawkins-Lee B."/>
            <person name="Zhong J."/>
            <person name="Zhang Y."/>
            <person name="Ochoa B."/>
            <person name="Agundez J.A."/>
            <person name="Voelckel M.A."/>
            <person name="Fisher R.B."/>
            <person name="Gu W."/>
            <person name="Xiong W.C."/>
            <person name="Mei L."/>
            <person name="She J.X."/>
            <person name="Wang C.Y."/>
        </authorList>
    </citation>
    <scope>INVOLVEMENT IN UFS1</scope>
</reference>
<reference key="5">
    <citation type="journal article" date="2010" name="Am. J. Hum. Genet.">
        <authorList>
            <person name="Pang J."/>
            <person name="Zhang S."/>
            <person name="Yang P."/>
            <person name="Hawkins-Lee B."/>
            <person name="Zhong J."/>
            <person name="Zhang Y."/>
            <person name="Ochoa B."/>
            <person name="Agundez J.A."/>
            <person name="Voelckel M.A."/>
            <person name="Fisher R.B."/>
            <person name="Gu W."/>
            <person name="Xiong W.C."/>
            <person name="Mei L."/>
            <person name="She J.X."/>
            <person name="Wang C.Y."/>
        </authorList>
    </citation>
    <scope>ERRATUM OF PUBMED:20560209</scope>
</reference>
<reference key="6">
    <citation type="journal article" date="2010" name="Am. J. Hum. Genet.">
        <title>Mutations in HPSE2 cause urofacial syndrome.</title>
        <authorList>
            <person name="Daly S.B."/>
            <person name="Urquhart J.E."/>
            <person name="Hilton E."/>
            <person name="McKenzie E.A."/>
            <person name="Kammerer R.A."/>
            <person name="Lewis M."/>
            <person name="Kerr B."/>
            <person name="Stuart H."/>
            <person name="Donnai D."/>
            <person name="Long D.A."/>
            <person name="Burgu B."/>
            <person name="Aydogdu O."/>
            <person name="Derbent M."/>
            <person name="Garcia-Minaur S."/>
            <person name="Reardon W."/>
            <person name="Gener B."/>
            <person name="Shalev S."/>
            <person name="Smith R."/>
            <person name="Woolf A.S."/>
            <person name="Black G.C."/>
            <person name="Newman W.G."/>
        </authorList>
    </citation>
    <scope>INVOLVEMENT IN UFS1</scope>
    <scope>TISSUE SPECIFICITY</scope>
    <scope>DEVELOPMENTAL STAGE</scope>
</reference>
<reference key="7">
    <citation type="journal article" date="2010" name="J. Biol. Chem.">
        <title>Heparanase 2 interacts with heparan sulfate with high affinity and inhibits heparanase activity.</title>
        <authorList>
            <person name="Levy-Adam F."/>
            <person name="Feld S."/>
            <person name="Cohen-Kaplan V."/>
            <person name="Shteingauz A."/>
            <person name="Gross M."/>
            <person name="Arvatz G."/>
            <person name="Naroditsky I."/>
            <person name="Ilan N."/>
            <person name="Doweck I."/>
            <person name="Vlodavsky I."/>
        </authorList>
    </citation>
    <scope>FUNCTION</scope>
    <scope>SUBCELLULAR LOCATION</scope>
    <scope>INTERACTION WITH HPSE</scope>
    <scope>ABSENCE OF HEPARANASE ACTIVITY</scope>
</reference>
<proteinExistence type="evidence at protein level"/>
<protein>
    <recommendedName>
        <fullName>Inactive heparanase-2</fullName>
        <shortName>Hpa2</shortName>
    </recommendedName>
</protein>
<keyword id="KW-0025">Alternative splicing</keyword>
<keyword id="KW-0272">Extracellular matrix</keyword>
<keyword id="KW-0325">Glycoprotein</keyword>
<keyword id="KW-1267">Proteomics identification</keyword>
<keyword id="KW-1185">Reference proteome</keyword>
<keyword id="KW-0964">Secreted</keyword>
<keyword id="KW-0732">Signal</keyword>
<sequence length="592" mass="66596">MRVLCAFPEAMPSSNSRPPACLAPGALYLALLLHLSLSSQAGDRRPLPVDRAAGLKEKTLILLDVSTKNPVRTVNENFLSLQLDPSIIHDGWLDFLSSKRLVTLARGLSPAFLRFGGKRTDFLQFQNLRNPAKSRGGPGPDYYLKNYEDDIVRSDVALDKQKGCKIAQHPDVMLELQREKAAQMHLVLLKEQFSNTYSNLILTARSLDKLYNFADCSGLHLIFALNALRRNPNNSWNSSSALSLLKYSASKKYNISWELGNEPNNYRTMHGRAVNGSQLGKDYIQLKSLLQPIRIYSRASLYGPNIGRPRKNVIALLDGFMKVAGSTVDAVTWQHCYIDGRVVKVMDFLKTRLLDTLSDQIRKIQKVVNTYTPGKKIWLEGVVTTSAGGTNNLSDSYAAGFLWLNTLGMLANQGIDVVIRHSFFDHGYNHLVDQNFNPLPDYWLSLLYKRLIGPKVLAVHVAGLQRKPRPGRVIRDKLRIYAHCTNHHNHNYVRGSITLFIINLHRSRKKIKLAGTLRDKLVHQYLLQPYGQEGLKSKSVQLNGQPLVMVDDGTLPELKPRPLRAGRTLVIPPVTMGFYVVKNVNALACRYR</sequence>
<comment type="function">
    <text evidence="5">Binds heparin and heparan sulfate with high affinity, but lacks heparanase activity. Inhibits HPSE, possibly by competing for its substrates (in vitro).</text>
</comment>
<comment type="subunit">
    <text evidence="5">Interacts with HPSE. Interacts with SDC1 (via glycan chains).</text>
</comment>
<comment type="subcellular location">
    <subcellularLocation>
        <location evidence="5">Secreted</location>
        <location evidence="5">Extracellular space</location>
        <location evidence="5">Extracellular matrix</location>
    </subcellularLocation>
</comment>
<comment type="alternative products">
    <event type="alternative splicing"/>
    <isoform>
        <id>Q8WWQ2-1</id>
        <name>1</name>
        <name>HPA2c</name>
        <sequence type="displayed"/>
    </isoform>
    <isoform>
        <id>Q8WWQ2-2</id>
        <name>2</name>
        <sequence type="described" ref="VSP_015852 VSP_015853"/>
    </isoform>
    <isoform>
        <id>Q8WWQ2-3</id>
        <name>3</name>
        <name>HPA2b</name>
        <sequence type="described" ref="VSP_015851"/>
    </isoform>
    <isoform>
        <id>Q8WWQ2-4</id>
        <name>4</name>
        <name>HPA2a</name>
        <sequence type="described" ref="VSP_015850"/>
    </isoform>
</comment>
<comment type="tissue specificity">
    <text evidence="2 4">Widely expressed, with the highest expression in brain, mammary gland, prostate, small intestine, testis and uterus. In the central nervous system, expressed in the spinal cord, caudate nucleus, thalamus, substantia nigra, medulla oblongata, putamen and pons. In the urinary bladder, expressed in longitudinal and circular layers of detrusor muscle. Found both in normal and cancer tissues.</text>
</comment>
<comment type="developmental stage">
    <text evidence="4">Expressed in the developing forebrain, diencephalon, midbrain, hind brain and spinal cord at Carnagie stage 16 (CS16, 6 weeks of gestation) and CS21 (8 weeks).</text>
</comment>
<comment type="disease" evidence="3 4">
    <disease id="DI-02762">
        <name>Urofacial syndrome 1</name>
        <acronym>UFS1</acronym>
        <description>A rare autosomal recessive disorder characterized by facial grimacing when attempting to smile and failure of the urinary bladder to void completely despite a lack of anatomical bladder outflow obstruction or overt neurological damage. Affected individuals often have reflux of infected urine from the bladder to the upper renal tract, with a risk of kidney damage and renal failure.</description>
        <dbReference type="MIM" id="236730"/>
    </disease>
    <text>The disease is caused by variants affecting the gene represented in this entry.</text>
</comment>
<comment type="similarity">
    <text evidence="9">Belongs to the glycosyl hydrolase 79 family.</text>
</comment>
<evidence type="ECO:0000255" key="1"/>
<evidence type="ECO:0000269" key="2">
    <source>
    </source>
</evidence>
<evidence type="ECO:0000269" key="3">
    <source>
    </source>
</evidence>
<evidence type="ECO:0000269" key="4">
    <source>
    </source>
</evidence>
<evidence type="ECO:0000269" key="5">
    <source>
    </source>
</evidence>
<evidence type="ECO:0000269" key="6">
    <source ref="2"/>
</evidence>
<evidence type="ECO:0000303" key="7">
    <source>
    </source>
</evidence>
<evidence type="ECO:0000303" key="8">
    <source ref="2"/>
</evidence>
<evidence type="ECO:0000305" key="9"/>
<dbReference type="EMBL" id="AF282885">
    <property type="protein sequence ID" value="AAG23421.1"/>
    <property type="molecule type" value="mRNA"/>
</dbReference>
<dbReference type="EMBL" id="AF282886">
    <property type="protein sequence ID" value="AAG23422.1"/>
    <property type="molecule type" value="mRNA"/>
</dbReference>
<dbReference type="EMBL" id="AF282887">
    <property type="protein sequence ID" value="AAG23423.1"/>
    <property type="molecule type" value="mRNA"/>
</dbReference>
<dbReference type="EMBL" id="AJ299719">
    <property type="protein sequence ID" value="CAC82491.1"/>
    <property type="molecule type" value="mRNA"/>
</dbReference>
<dbReference type="EMBL" id="AJ299720">
    <property type="protein sequence ID" value="CAC82492.1"/>
    <property type="molecule type" value="mRNA"/>
</dbReference>
<dbReference type="EMBL" id="AL590036">
    <property type="status" value="NOT_ANNOTATED_CDS"/>
    <property type="molecule type" value="Genomic_DNA"/>
</dbReference>
<dbReference type="EMBL" id="AL139243">
    <property type="status" value="NOT_ANNOTATED_CDS"/>
    <property type="molecule type" value="Genomic_DNA"/>
</dbReference>
<dbReference type="EMBL" id="AL356268">
    <property type="status" value="NOT_ANNOTATED_CDS"/>
    <property type="molecule type" value="Genomic_DNA"/>
</dbReference>
<dbReference type="EMBL" id="AL445251">
    <property type="status" value="NOT_ANNOTATED_CDS"/>
    <property type="molecule type" value="Genomic_DNA"/>
</dbReference>
<dbReference type="EMBL" id="AL356220">
    <property type="status" value="NOT_ANNOTATED_CDS"/>
    <property type="molecule type" value="Genomic_DNA"/>
</dbReference>
<dbReference type="CCDS" id="CCDS53566.1">
    <molecule id="Q8WWQ2-4"/>
</dbReference>
<dbReference type="CCDS" id="CCDS53567.1">
    <molecule id="Q8WWQ2-3"/>
</dbReference>
<dbReference type="CCDS" id="CCDS53568.1">
    <molecule id="Q8WWQ2-2"/>
</dbReference>
<dbReference type="CCDS" id="CCDS7477.1">
    <molecule id="Q8WWQ2-1"/>
</dbReference>
<dbReference type="PIR" id="JC7506">
    <property type="entry name" value="JC7506"/>
</dbReference>
<dbReference type="RefSeq" id="NP_001159716.1">
    <molecule id="Q8WWQ2-3"/>
    <property type="nucleotide sequence ID" value="NM_001166244.1"/>
</dbReference>
<dbReference type="RefSeq" id="NP_001159717.1">
    <molecule id="Q8WWQ2-4"/>
    <property type="nucleotide sequence ID" value="NM_001166245.1"/>
</dbReference>
<dbReference type="RefSeq" id="NP_001159718.1">
    <molecule id="Q8WWQ2-2"/>
    <property type="nucleotide sequence ID" value="NM_001166246.1"/>
</dbReference>
<dbReference type="RefSeq" id="NP_068600.4">
    <molecule id="Q8WWQ2-1"/>
    <property type="nucleotide sequence ID" value="NM_021828.4"/>
</dbReference>
<dbReference type="SMR" id="Q8WWQ2"/>
<dbReference type="BioGRID" id="121926">
    <property type="interactions" value="30"/>
</dbReference>
<dbReference type="FunCoup" id="Q8WWQ2">
    <property type="interactions" value="51"/>
</dbReference>
<dbReference type="IntAct" id="Q8WWQ2">
    <property type="interactions" value="22"/>
</dbReference>
<dbReference type="STRING" id="9606.ENSP00000359583"/>
<dbReference type="GlyCosmos" id="Q8WWQ2">
    <property type="glycosylation" value="2 sites, No reported glycans"/>
</dbReference>
<dbReference type="GlyGen" id="Q8WWQ2">
    <property type="glycosylation" value="2 sites"/>
</dbReference>
<dbReference type="iPTMnet" id="Q8WWQ2"/>
<dbReference type="PhosphoSitePlus" id="Q8WWQ2"/>
<dbReference type="BioMuta" id="HPSE2"/>
<dbReference type="DMDM" id="125987832"/>
<dbReference type="jPOST" id="Q8WWQ2"/>
<dbReference type="MassIVE" id="Q8WWQ2"/>
<dbReference type="PaxDb" id="9606-ENSP00000359583"/>
<dbReference type="PeptideAtlas" id="Q8WWQ2"/>
<dbReference type="ProteomicsDB" id="74920">
    <molecule id="Q8WWQ2-1"/>
</dbReference>
<dbReference type="ProteomicsDB" id="74921">
    <molecule id="Q8WWQ2-2"/>
</dbReference>
<dbReference type="ProteomicsDB" id="74922">
    <molecule id="Q8WWQ2-3"/>
</dbReference>
<dbReference type="ProteomicsDB" id="74923">
    <molecule id="Q8WWQ2-4"/>
</dbReference>
<dbReference type="Antibodypedia" id="45898">
    <property type="antibodies" value="179 antibodies from 29 providers"/>
</dbReference>
<dbReference type="DNASU" id="60495"/>
<dbReference type="Ensembl" id="ENST00000370546.5">
    <molecule id="Q8WWQ2-2"/>
    <property type="protein sequence ID" value="ENSP00000359577.1"/>
    <property type="gene ID" value="ENSG00000172987.14"/>
</dbReference>
<dbReference type="Ensembl" id="ENST00000370549.5">
    <molecule id="Q8WWQ2-3"/>
    <property type="protein sequence ID" value="ENSP00000359580.1"/>
    <property type="gene ID" value="ENSG00000172987.14"/>
</dbReference>
<dbReference type="Ensembl" id="ENST00000370552.8">
    <molecule id="Q8WWQ2-1"/>
    <property type="protein sequence ID" value="ENSP00000359583.3"/>
    <property type="gene ID" value="ENSG00000172987.14"/>
</dbReference>
<dbReference type="Ensembl" id="ENST00000628193.2">
    <molecule id="Q8WWQ2-4"/>
    <property type="protein sequence ID" value="ENSP00000485916.1"/>
    <property type="gene ID" value="ENSG00000172987.14"/>
</dbReference>
<dbReference type="GeneID" id="60495"/>
<dbReference type="KEGG" id="hsa:60495"/>
<dbReference type="MANE-Select" id="ENST00000370552.8">
    <property type="protein sequence ID" value="ENSP00000359583.3"/>
    <property type="RefSeq nucleotide sequence ID" value="NM_021828.5"/>
    <property type="RefSeq protein sequence ID" value="NP_068600.4"/>
</dbReference>
<dbReference type="UCSC" id="uc001kpn.3">
    <molecule id="Q8WWQ2-1"/>
    <property type="organism name" value="human"/>
</dbReference>
<dbReference type="AGR" id="HGNC:18374"/>
<dbReference type="CTD" id="60495"/>
<dbReference type="DisGeNET" id="60495"/>
<dbReference type="GeneCards" id="HPSE2"/>
<dbReference type="GeneReviews" id="HPSE2"/>
<dbReference type="HGNC" id="HGNC:18374">
    <property type="gene designation" value="HPSE2"/>
</dbReference>
<dbReference type="HPA" id="ENSG00000172987">
    <property type="expression patterns" value="Tissue enhanced (brain, cervix, vagina)"/>
</dbReference>
<dbReference type="MalaCards" id="HPSE2"/>
<dbReference type="MIM" id="236730">
    <property type="type" value="phenotype"/>
</dbReference>
<dbReference type="MIM" id="613469">
    <property type="type" value="gene"/>
</dbReference>
<dbReference type="neXtProt" id="NX_Q8WWQ2"/>
<dbReference type="OpenTargets" id="ENSG00000172987"/>
<dbReference type="Orphanet" id="2704">
    <property type="disease" value="Urofacial syndrome"/>
</dbReference>
<dbReference type="PharmGKB" id="PA38533"/>
<dbReference type="VEuPathDB" id="HostDB:ENSG00000172987"/>
<dbReference type="eggNOG" id="ENOG502QQST">
    <property type="taxonomic scope" value="Eukaryota"/>
</dbReference>
<dbReference type="GeneTree" id="ENSGT00390000004874"/>
<dbReference type="InParanoid" id="Q8WWQ2"/>
<dbReference type="OMA" id="YMRGSIT"/>
<dbReference type="OrthoDB" id="726732at2759"/>
<dbReference type="PAN-GO" id="Q8WWQ2">
    <property type="GO annotations" value="3 GO annotations based on evolutionary models"/>
</dbReference>
<dbReference type="PhylomeDB" id="Q8WWQ2"/>
<dbReference type="TreeFam" id="TF328999"/>
<dbReference type="PathwayCommons" id="Q8WWQ2"/>
<dbReference type="Reactome" id="R-HSA-2024096">
    <property type="pathway name" value="HS-GAG degradation"/>
</dbReference>
<dbReference type="SignaLink" id="Q8WWQ2"/>
<dbReference type="SIGNOR" id="Q8WWQ2"/>
<dbReference type="BioGRID-ORCS" id="60495">
    <property type="hits" value="10 hits in 1146 CRISPR screens"/>
</dbReference>
<dbReference type="ChiTaRS" id="HPSE2">
    <property type="organism name" value="human"/>
</dbReference>
<dbReference type="GeneWiki" id="HPSE2"/>
<dbReference type="GenomeRNAi" id="60495"/>
<dbReference type="Pharos" id="Q8WWQ2">
    <property type="development level" value="Tbio"/>
</dbReference>
<dbReference type="PRO" id="PR:Q8WWQ2"/>
<dbReference type="Proteomes" id="UP000005640">
    <property type="component" value="Chromosome 10"/>
</dbReference>
<dbReference type="RNAct" id="Q8WWQ2">
    <property type="molecule type" value="protein"/>
</dbReference>
<dbReference type="Bgee" id="ENSG00000172987">
    <property type="expression patterns" value="Expressed in calcaneal tendon and 98 other cell types or tissues"/>
</dbReference>
<dbReference type="ExpressionAtlas" id="Q8WWQ2">
    <property type="expression patterns" value="baseline and differential"/>
</dbReference>
<dbReference type="GO" id="GO:0031012">
    <property type="term" value="C:extracellular matrix"/>
    <property type="evidence" value="ECO:0000314"/>
    <property type="project" value="UniProtKB"/>
</dbReference>
<dbReference type="GO" id="GO:0005615">
    <property type="term" value="C:extracellular space"/>
    <property type="evidence" value="ECO:0000318"/>
    <property type="project" value="GO_Central"/>
</dbReference>
<dbReference type="GO" id="GO:0005886">
    <property type="term" value="C:plasma membrane"/>
    <property type="evidence" value="ECO:0000304"/>
    <property type="project" value="Reactome"/>
</dbReference>
<dbReference type="GO" id="GO:0043395">
    <property type="term" value="F:heparan sulfate proteoglycan binding"/>
    <property type="evidence" value="ECO:0000314"/>
    <property type="project" value="UniProtKB"/>
</dbReference>
<dbReference type="GO" id="GO:0030305">
    <property type="term" value="F:heparanase activity"/>
    <property type="evidence" value="ECO:0000304"/>
    <property type="project" value="UniProtKB"/>
</dbReference>
<dbReference type="GO" id="GO:0008283">
    <property type="term" value="P:cell population proliferation"/>
    <property type="evidence" value="ECO:0007669"/>
    <property type="project" value="Ensembl"/>
</dbReference>
<dbReference type="GO" id="GO:0030198">
    <property type="term" value="P:extracellular matrix organization"/>
    <property type="evidence" value="ECO:0000318"/>
    <property type="project" value="GO_Central"/>
</dbReference>
<dbReference type="GO" id="GO:0008284">
    <property type="term" value="P:positive regulation of cell population proliferation"/>
    <property type="evidence" value="ECO:0007669"/>
    <property type="project" value="Ensembl"/>
</dbReference>
<dbReference type="Gene3D" id="3.20.20.80">
    <property type="entry name" value="Glycosidases"/>
    <property type="match status" value="1"/>
</dbReference>
<dbReference type="InterPro" id="IPR005199">
    <property type="entry name" value="Glyco_hydro_79"/>
</dbReference>
<dbReference type="InterPro" id="IPR017853">
    <property type="entry name" value="Glycoside_hydrolase_SF"/>
</dbReference>
<dbReference type="PANTHER" id="PTHR46145">
    <property type="entry name" value="HEPARANASE"/>
    <property type="match status" value="1"/>
</dbReference>
<dbReference type="PANTHER" id="PTHR46145:SF1">
    <property type="entry name" value="INACTIVE HEPARANASE-2"/>
    <property type="match status" value="1"/>
</dbReference>
<dbReference type="Pfam" id="PF03662">
    <property type="entry name" value="Glyco_hydro_79n"/>
    <property type="match status" value="1"/>
</dbReference>
<dbReference type="SUPFAM" id="SSF51445">
    <property type="entry name" value="(Trans)glycosidases"/>
    <property type="match status" value="1"/>
</dbReference>
<accession>Q8WWQ2</accession>
<accession>Q5VUH4</accession>
<accession>Q5VUH5</accession>
<accession>Q5VUH6</accession>
<accession>Q8WWQ1</accession>
<accession>Q9HB37</accession>
<accession>Q9HB38</accession>
<accession>Q9HB39</accession>
<gene>
    <name type="primary">HPSE2</name>
    <name type="synonym">HPA2</name>
</gene>
<organism>
    <name type="scientific">Homo sapiens</name>
    <name type="common">Human</name>
    <dbReference type="NCBI Taxonomy" id="9606"/>
    <lineage>
        <taxon>Eukaryota</taxon>
        <taxon>Metazoa</taxon>
        <taxon>Chordata</taxon>
        <taxon>Craniata</taxon>
        <taxon>Vertebrata</taxon>
        <taxon>Euteleostomi</taxon>
        <taxon>Mammalia</taxon>
        <taxon>Eutheria</taxon>
        <taxon>Euarchontoglires</taxon>
        <taxon>Primates</taxon>
        <taxon>Haplorrhini</taxon>
        <taxon>Catarrhini</taxon>
        <taxon>Hominidae</taxon>
        <taxon>Homo</taxon>
    </lineage>
</organism>
<name>HPSE2_HUMAN</name>